<gene>
    <name evidence="1" type="primary">pstB1</name>
    <name type="ordered locus">Csal_1479</name>
</gene>
<dbReference type="EC" id="7.3.2.1" evidence="1"/>
<dbReference type="EMBL" id="CP000285">
    <property type="protein sequence ID" value="ABE58832.1"/>
    <property type="molecule type" value="Genomic_DNA"/>
</dbReference>
<dbReference type="RefSeq" id="WP_011506778.1">
    <property type="nucleotide sequence ID" value="NC_007963.1"/>
</dbReference>
<dbReference type="SMR" id="Q1QXH6"/>
<dbReference type="STRING" id="290398.Csal_1479"/>
<dbReference type="GeneID" id="95334206"/>
<dbReference type="KEGG" id="csa:Csal_1479"/>
<dbReference type="eggNOG" id="COG1117">
    <property type="taxonomic scope" value="Bacteria"/>
</dbReference>
<dbReference type="HOGENOM" id="CLU_000604_1_22_6"/>
<dbReference type="OrthoDB" id="9802264at2"/>
<dbReference type="Proteomes" id="UP000000239">
    <property type="component" value="Chromosome"/>
</dbReference>
<dbReference type="GO" id="GO:0005886">
    <property type="term" value="C:plasma membrane"/>
    <property type="evidence" value="ECO:0007669"/>
    <property type="project" value="UniProtKB-SubCell"/>
</dbReference>
<dbReference type="GO" id="GO:0005524">
    <property type="term" value="F:ATP binding"/>
    <property type="evidence" value="ECO:0007669"/>
    <property type="project" value="UniProtKB-KW"/>
</dbReference>
<dbReference type="GO" id="GO:0016887">
    <property type="term" value="F:ATP hydrolysis activity"/>
    <property type="evidence" value="ECO:0007669"/>
    <property type="project" value="InterPro"/>
</dbReference>
<dbReference type="GO" id="GO:0015415">
    <property type="term" value="F:ATPase-coupled phosphate ion transmembrane transporter activity"/>
    <property type="evidence" value="ECO:0007669"/>
    <property type="project" value="UniProtKB-EC"/>
</dbReference>
<dbReference type="GO" id="GO:0035435">
    <property type="term" value="P:phosphate ion transmembrane transport"/>
    <property type="evidence" value="ECO:0007669"/>
    <property type="project" value="InterPro"/>
</dbReference>
<dbReference type="CDD" id="cd03260">
    <property type="entry name" value="ABC_PstB_phosphate_transporter"/>
    <property type="match status" value="1"/>
</dbReference>
<dbReference type="Gene3D" id="3.40.50.300">
    <property type="entry name" value="P-loop containing nucleotide triphosphate hydrolases"/>
    <property type="match status" value="1"/>
</dbReference>
<dbReference type="InterPro" id="IPR003593">
    <property type="entry name" value="AAA+_ATPase"/>
</dbReference>
<dbReference type="InterPro" id="IPR003439">
    <property type="entry name" value="ABC_transporter-like_ATP-bd"/>
</dbReference>
<dbReference type="InterPro" id="IPR017871">
    <property type="entry name" value="ABC_transporter-like_CS"/>
</dbReference>
<dbReference type="InterPro" id="IPR027417">
    <property type="entry name" value="P-loop_NTPase"/>
</dbReference>
<dbReference type="InterPro" id="IPR005670">
    <property type="entry name" value="PstB-like"/>
</dbReference>
<dbReference type="NCBIfam" id="TIGR00972">
    <property type="entry name" value="3a0107s01c2"/>
    <property type="match status" value="1"/>
</dbReference>
<dbReference type="PANTHER" id="PTHR43423">
    <property type="entry name" value="ABC TRANSPORTER I FAMILY MEMBER 17"/>
    <property type="match status" value="1"/>
</dbReference>
<dbReference type="PANTHER" id="PTHR43423:SF1">
    <property type="entry name" value="ABC TRANSPORTER I FAMILY MEMBER 17"/>
    <property type="match status" value="1"/>
</dbReference>
<dbReference type="Pfam" id="PF00005">
    <property type="entry name" value="ABC_tran"/>
    <property type="match status" value="1"/>
</dbReference>
<dbReference type="SMART" id="SM00382">
    <property type="entry name" value="AAA"/>
    <property type="match status" value="1"/>
</dbReference>
<dbReference type="SUPFAM" id="SSF52540">
    <property type="entry name" value="P-loop containing nucleoside triphosphate hydrolases"/>
    <property type="match status" value="1"/>
</dbReference>
<dbReference type="PROSITE" id="PS00211">
    <property type="entry name" value="ABC_TRANSPORTER_1"/>
    <property type="match status" value="1"/>
</dbReference>
<dbReference type="PROSITE" id="PS50893">
    <property type="entry name" value="ABC_TRANSPORTER_2"/>
    <property type="match status" value="1"/>
</dbReference>
<dbReference type="PROSITE" id="PS51238">
    <property type="entry name" value="PSTB"/>
    <property type="match status" value="1"/>
</dbReference>
<feature type="chain" id="PRO_0000272436" description="Phosphate import ATP-binding protein PstB 1">
    <location>
        <begin position="1"/>
        <end position="260"/>
    </location>
</feature>
<feature type="domain" description="ABC transporter" evidence="1">
    <location>
        <begin position="13"/>
        <end position="255"/>
    </location>
</feature>
<feature type="binding site" evidence="1">
    <location>
        <begin position="45"/>
        <end position="52"/>
    </location>
    <ligand>
        <name>ATP</name>
        <dbReference type="ChEBI" id="CHEBI:30616"/>
    </ligand>
</feature>
<reference key="1">
    <citation type="journal article" date="2011" name="Stand. Genomic Sci.">
        <title>Complete genome sequence of the halophilic and highly halotolerant Chromohalobacter salexigens type strain (1H11(T)).</title>
        <authorList>
            <person name="Copeland A."/>
            <person name="O'Connor K."/>
            <person name="Lucas S."/>
            <person name="Lapidus A."/>
            <person name="Berry K.W."/>
            <person name="Detter J.C."/>
            <person name="Del Rio T.G."/>
            <person name="Hammon N."/>
            <person name="Dalin E."/>
            <person name="Tice H."/>
            <person name="Pitluck S."/>
            <person name="Bruce D."/>
            <person name="Goodwin L."/>
            <person name="Han C."/>
            <person name="Tapia R."/>
            <person name="Saunders E."/>
            <person name="Schmutz J."/>
            <person name="Brettin T."/>
            <person name="Larimer F."/>
            <person name="Land M."/>
            <person name="Hauser L."/>
            <person name="Vargas C."/>
            <person name="Nieto J.J."/>
            <person name="Kyrpides N.C."/>
            <person name="Ivanova N."/>
            <person name="Goker M."/>
            <person name="Klenk H.P."/>
            <person name="Csonka L.N."/>
            <person name="Woyke T."/>
        </authorList>
    </citation>
    <scope>NUCLEOTIDE SEQUENCE [LARGE SCALE GENOMIC DNA]</scope>
    <source>
        <strain>ATCC BAA-138 / DSM 3043 / CIP 106854 / NCIMB 13768 / 1H11</strain>
    </source>
</reference>
<evidence type="ECO:0000255" key="1">
    <source>
        <dbReference type="HAMAP-Rule" id="MF_01702"/>
    </source>
</evidence>
<accession>Q1QXH6</accession>
<protein>
    <recommendedName>
        <fullName evidence="1">Phosphate import ATP-binding protein PstB 1</fullName>
        <ecNumber evidence="1">7.3.2.1</ecNumber>
    </recommendedName>
    <alternativeName>
        <fullName evidence="1">ABC phosphate transporter 1</fullName>
    </alternativeName>
    <alternativeName>
        <fullName evidence="1">Phosphate-transporting ATPase 1</fullName>
    </alternativeName>
</protein>
<comment type="function">
    <text evidence="1">Part of the ABC transporter complex PstSACB involved in phosphate import. Responsible for energy coupling to the transport system.</text>
</comment>
<comment type="catalytic activity">
    <reaction evidence="1">
        <text>phosphate(out) + ATP + H2O = ADP + 2 phosphate(in) + H(+)</text>
        <dbReference type="Rhea" id="RHEA:24440"/>
        <dbReference type="ChEBI" id="CHEBI:15377"/>
        <dbReference type="ChEBI" id="CHEBI:15378"/>
        <dbReference type="ChEBI" id="CHEBI:30616"/>
        <dbReference type="ChEBI" id="CHEBI:43474"/>
        <dbReference type="ChEBI" id="CHEBI:456216"/>
        <dbReference type="EC" id="7.3.2.1"/>
    </reaction>
</comment>
<comment type="subunit">
    <text evidence="1">The complex is composed of two ATP-binding proteins (PstB), two transmembrane proteins (PstC and PstA) and a solute-binding protein (PstS).</text>
</comment>
<comment type="subcellular location">
    <subcellularLocation>
        <location evidence="1">Cell inner membrane</location>
        <topology evidence="1">Peripheral membrane protein</topology>
    </subcellularLocation>
</comment>
<comment type="similarity">
    <text evidence="1">Belongs to the ABC transporter superfamily. Phosphate importer (TC 3.A.1.7) family.</text>
</comment>
<organism>
    <name type="scientific">Chromohalobacter salexigens (strain ATCC BAA-138 / DSM 3043 / CIP 106854 / NCIMB 13768 / 1H11)</name>
    <dbReference type="NCBI Taxonomy" id="290398"/>
    <lineage>
        <taxon>Bacteria</taxon>
        <taxon>Pseudomonadati</taxon>
        <taxon>Pseudomonadota</taxon>
        <taxon>Gammaproteobacteria</taxon>
        <taxon>Oceanospirillales</taxon>
        <taxon>Halomonadaceae</taxon>
        <taxon>Chromohalobacter</taxon>
    </lineage>
</organism>
<name>PSTB1_CHRSD</name>
<sequence>MTRNENVEENLSVRVRDLNLWYGDHQALKDISIDIFANTVTALIGPSGCGKSTFLRCLNRMNDLINSVSIKGLVEMDGHDVNARGMDEVALRRRVGMVFQKPNPFPKSIYENVAYAPRMHDMVSRKADQDELVERALRDAGLWNEVKDKLHEPGTSLSGGQQQRLCIARAIAVRPDVILMDEPTSALDPISTATIEDLMDKLKKDFTIVTVTHNMQQAARVADYTAFFHLGEMIEYNATKQMFSNPHTKKAEDYITGRYG</sequence>
<keyword id="KW-0067">ATP-binding</keyword>
<keyword id="KW-0997">Cell inner membrane</keyword>
<keyword id="KW-1003">Cell membrane</keyword>
<keyword id="KW-0472">Membrane</keyword>
<keyword id="KW-0547">Nucleotide-binding</keyword>
<keyword id="KW-0592">Phosphate transport</keyword>
<keyword id="KW-1185">Reference proteome</keyword>
<keyword id="KW-1278">Translocase</keyword>
<keyword id="KW-0813">Transport</keyword>
<proteinExistence type="inferred from homology"/>